<proteinExistence type="inferred from homology"/>
<accession>Q8YE58</accession>
<evidence type="ECO:0000255" key="1">
    <source>
        <dbReference type="HAMAP-Rule" id="MF_01395"/>
    </source>
</evidence>
<evidence type="ECO:0000255" key="2">
    <source>
        <dbReference type="PROSITE-ProRule" id="PRU01136"/>
    </source>
</evidence>
<organism>
    <name type="scientific">Brucella melitensis biotype 1 (strain ATCC 23456 / CCUG 17765 / NCTC 10094 / 16M)</name>
    <dbReference type="NCBI Taxonomy" id="224914"/>
    <lineage>
        <taxon>Bacteria</taxon>
        <taxon>Pseudomonadati</taxon>
        <taxon>Pseudomonadota</taxon>
        <taxon>Alphaproteobacteria</taxon>
        <taxon>Hyphomicrobiales</taxon>
        <taxon>Brucellaceae</taxon>
        <taxon>Brucella/Ochrobactrum group</taxon>
        <taxon>Brucella</taxon>
    </lineage>
</organism>
<dbReference type="EC" id="2.1.3.15" evidence="1"/>
<dbReference type="EMBL" id="AE008917">
    <property type="protein sequence ID" value="AAL53201.1"/>
    <property type="molecule type" value="Genomic_DNA"/>
</dbReference>
<dbReference type="PIR" id="AF3504">
    <property type="entry name" value="AF3504"/>
</dbReference>
<dbReference type="RefSeq" id="WP_002965171.1">
    <property type="nucleotide sequence ID" value="NZ_GG703778.1"/>
</dbReference>
<dbReference type="SMR" id="Q8YE58"/>
<dbReference type="GeneID" id="55591673"/>
<dbReference type="KEGG" id="bme:BMEI2020"/>
<dbReference type="KEGG" id="bmel:DK63_1471"/>
<dbReference type="PATRIC" id="fig|224914.52.peg.1549"/>
<dbReference type="eggNOG" id="COG0777">
    <property type="taxonomic scope" value="Bacteria"/>
</dbReference>
<dbReference type="PhylomeDB" id="Q8YE58"/>
<dbReference type="UniPathway" id="UPA00655">
    <property type="reaction ID" value="UER00711"/>
</dbReference>
<dbReference type="Proteomes" id="UP000000419">
    <property type="component" value="Chromosome I"/>
</dbReference>
<dbReference type="GO" id="GO:0009329">
    <property type="term" value="C:acetate CoA-transferase complex"/>
    <property type="evidence" value="ECO:0007669"/>
    <property type="project" value="TreeGrafter"/>
</dbReference>
<dbReference type="GO" id="GO:0003989">
    <property type="term" value="F:acetyl-CoA carboxylase activity"/>
    <property type="evidence" value="ECO:0007669"/>
    <property type="project" value="InterPro"/>
</dbReference>
<dbReference type="GO" id="GO:0005524">
    <property type="term" value="F:ATP binding"/>
    <property type="evidence" value="ECO:0007669"/>
    <property type="project" value="UniProtKB-KW"/>
</dbReference>
<dbReference type="GO" id="GO:0016743">
    <property type="term" value="F:carboxyl- or carbamoyltransferase activity"/>
    <property type="evidence" value="ECO:0007669"/>
    <property type="project" value="UniProtKB-UniRule"/>
</dbReference>
<dbReference type="GO" id="GO:0006633">
    <property type="term" value="P:fatty acid biosynthetic process"/>
    <property type="evidence" value="ECO:0007669"/>
    <property type="project" value="UniProtKB-KW"/>
</dbReference>
<dbReference type="GO" id="GO:2001295">
    <property type="term" value="P:malonyl-CoA biosynthetic process"/>
    <property type="evidence" value="ECO:0007669"/>
    <property type="project" value="UniProtKB-UniRule"/>
</dbReference>
<dbReference type="Gene3D" id="3.90.226.10">
    <property type="entry name" value="2-enoyl-CoA Hydratase, Chain A, domain 1"/>
    <property type="match status" value="1"/>
</dbReference>
<dbReference type="HAMAP" id="MF_01395">
    <property type="entry name" value="AcetylCoA_CT_beta"/>
    <property type="match status" value="1"/>
</dbReference>
<dbReference type="InterPro" id="IPR034733">
    <property type="entry name" value="AcCoA_carboxyl_beta"/>
</dbReference>
<dbReference type="InterPro" id="IPR000438">
    <property type="entry name" value="Acetyl_CoA_COase_Trfase_b_su"/>
</dbReference>
<dbReference type="InterPro" id="IPR029045">
    <property type="entry name" value="ClpP/crotonase-like_dom_sf"/>
</dbReference>
<dbReference type="InterPro" id="IPR011762">
    <property type="entry name" value="COA_CT_N"/>
</dbReference>
<dbReference type="NCBIfam" id="TIGR00515">
    <property type="entry name" value="accD"/>
    <property type="match status" value="1"/>
</dbReference>
<dbReference type="PANTHER" id="PTHR42995">
    <property type="entry name" value="ACETYL-COENZYME A CARBOXYLASE CARBOXYL TRANSFERASE SUBUNIT BETA, CHLOROPLASTIC"/>
    <property type="match status" value="1"/>
</dbReference>
<dbReference type="PANTHER" id="PTHR42995:SF5">
    <property type="entry name" value="ACETYL-COENZYME A CARBOXYLASE CARBOXYL TRANSFERASE SUBUNIT BETA, CHLOROPLASTIC"/>
    <property type="match status" value="1"/>
</dbReference>
<dbReference type="Pfam" id="PF01039">
    <property type="entry name" value="Carboxyl_trans"/>
    <property type="match status" value="1"/>
</dbReference>
<dbReference type="PRINTS" id="PR01070">
    <property type="entry name" value="ACCCTRFRASEB"/>
</dbReference>
<dbReference type="SUPFAM" id="SSF52096">
    <property type="entry name" value="ClpP/crotonase"/>
    <property type="match status" value="1"/>
</dbReference>
<dbReference type="PROSITE" id="PS50980">
    <property type="entry name" value="COA_CT_NTER"/>
    <property type="match status" value="1"/>
</dbReference>
<name>ACCD_BRUME</name>
<feature type="chain" id="PRO_0000389704" description="Acetyl-coenzyme A carboxylase carboxyl transferase subunit beta">
    <location>
        <begin position="1"/>
        <end position="301"/>
    </location>
</feature>
<feature type="domain" description="CoA carboxyltransferase N-terminal" evidence="2">
    <location>
        <begin position="25"/>
        <end position="294"/>
    </location>
</feature>
<reference key="1">
    <citation type="journal article" date="2002" name="Proc. Natl. Acad. Sci. U.S.A.">
        <title>The genome sequence of the facultative intracellular pathogen Brucella melitensis.</title>
        <authorList>
            <person name="DelVecchio V.G."/>
            <person name="Kapatral V."/>
            <person name="Redkar R.J."/>
            <person name="Patra G."/>
            <person name="Mujer C."/>
            <person name="Los T."/>
            <person name="Ivanova N."/>
            <person name="Anderson I."/>
            <person name="Bhattacharyya A."/>
            <person name="Lykidis A."/>
            <person name="Reznik G."/>
            <person name="Jablonski L."/>
            <person name="Larsen N."/>
            <person name="D'Souza M."/>
            <person name="Bernal A."/>
            <person name="Mazur M."/>
            <person name="Goltsman E."/>
            <person name="Selkov E."/>
            <person name="Elzer P.H."/>
            <person name="Hagius S."/>
            <person name="O'Callaghan D."/>
            <person name="Letesson J.-J."/>
            <person name="Haselkorn R."/>
            <person name="Kyrpides N.C."/>
            <person name="Overbeek R."/>
        </authorList>
    </citation>
    <scope>NUCLEOTIDE SEQUENCE [LARGE SCALE GENOMIC DNA]</scope>
    <source>
        <strain>ATCC 23456 / CCUG 17765 / NCTC 10094 / 16M</strain>
    </source>
</reference>
<protein>
    <recommendedName>
        <fullName evidence="1">Acetyl-coenzyme A carboxylase carboxyl transferase subunit beta</fullName>
        <shortName evidence="1">ACCase subunit beta</shortName>
        <shortName evidence="1">Acetyl-CoA carboxylase carboxyltransferase subunit beta</shortName>
        <ecNumber evidence="1">2.1.3.15</ecNumber>
    </recommendedName>
</protein>
<gene>
    <name evidence="1" type="primary">accD</name>
    <name type="ordered locus">BMEI2020</name>
</gene>
<keyword id="KW-0067">ATP-binding</keyword>
<keyword id="KW-0963">Cytoplasm</keyword>
<keyword id="KW-0275">Fatty acid biosynthesis</keyword>
<keyword id="KW-0276">Fatty acid metabolism</keyword>
<keyword id="KW-0444">Lipid biosynthesis</keyword>
<keyword id="KW-0443">Lipid metabolism</keyword>
<keyword id="KW-0547">Nucleotide-binding</keyword>
<keyword id="KW-0808">Transferase</keyword>
<comment type="function">
    <text evidence="1">Component of the acetyl coenzyme A carboxylase (ACC) complex. Biotin carboxylase (BC) catalyzes the carboxylation of biotin on its carrier protein (BCCP) and then the CO(2) group is transferred by the transcarboxylase to acetyl-CoA to form malonyl-CoA.</text>
</comment>
<comment type="catalytic activity">
    <reaction evidence="1">
        <text>N(6)-carboxybiotinyl-L-lysyl-[protein] + acetyl-CoA = N(6)-biotinyl-L-lysyl-[protein] + malonyl-CoA</text>
        <dbReference type="Rhea" id="RHEA:54728"/>
        <dbReference type="Rhea" id="RHEA-COMP:10505"/>
        <dbReference type="Rhea" id="RHEA-COMP:10506"/>
        <dbReference type="ChEBI" id="CHEBI:57288"/>
        <dbReference type="ChEBI" id="CHEBI:57384"/>
        <dbReference type="ChEBI" id="CHEBI:83144"/>
        <dbReference type="ChEBI" id="CHEBI:83145"/>
        <dbReference type="EC" id="2.1.3.15"/>
    </reaction>
</comment>
<comment type="pathway">
    <text evidence="1">Lipid metabolism; malonyl-CoA biosynthesis; malonyl-CoA from acetyl-CoA: step 1/1.</text>
</comment>
<comment type="subunit">
    <text evidence="1">Acetyl-CoA carboxylase is a heterohexamer composed of biotin carboxyl carrier protein (AccB), biotin carboxylase (AccC) and two subunits each of ACCase subunit alpha (AccA) and ACCase subunit beta (AccD).</text>
</comment>
<comment type="subcellular location">
    <subcellularLocation>
        <location evidence="1">Cytoplasm</location>
    </subcellularLocation>
</comment>
<comment type="similarity">
    <text evidence="1">Belongs to the AccD/PCCB family.</text>
</comment>
<sequence length="301" mass="33270">MNWITNYVRPKINSMLGRREMPENLWIKDPSTGEMVFHKDLESNQFVIPSSGHHMRIKAKDRLRFFFDNGEYTTLEAPKVPLDPLKFRDEKKYIDRLKDYRSRTGMDDAIVNGLGTIEGLPIVATVQDFSFMGGSLGMGAGEAIIQGFEKAIELKRPLVLFASSGGARMQEGILSLMQLPRTTVAVEMLKEAGLPYIVVLTNPTTGGVTASYAMLGDIHIAEPGALIGFAGPRVIEQTIREKLPEGFQSSEYLMEHGMVDMVVSRLELKATIARLLKIMTKQPANSDAPAPQKPDADSKAA</sequence>